<protein>
    <recommendedName>
        <fullName evidence="1">Methionyl-tRNA formyltransferase</fullName>
        <ecNumber evidence="1">2.1.2.9</ecNumber>
    </recommendedName>
</protein>
<proteinExistence type="inferred from homology"/>
<sequence>MRVVFMGTPEFSVPILTAIIGHGYEVVAAYTQPPRPAGRRGLELTRSPVHEKAEQFGIPVFTPKSLKGAEEQDVFASLEADVAIVVAYGLLLPKAILDAPRLGCYNGHASLLPRWRGAAPIQRAIMAGDAETGMMIMKMDEGLDTGLVAMAEKVAITPDMTAGELHDRLSMIGADLMIRALGALERESLALQPQAEEGVTYAAKIDKAEARIDWSKPAKDVHNSIRGLSPFPGAWCEMEINGAVERVKLQRSTLGEGSGAPGTVLDDRLTIACGEGAVRLATLQHSGGKPLPAQEFLRGQRVTKVL</sequence>
<name>FMT_BRUSI</name>
<dbReference type="EC" id="2.1.2.9" evidence="1"/>
<dbReference type="EMBL" id="CP000912">
    <property type="protein sequence ID" value="ABY39980.1"/>
    <property type="molecule type" value="Genomic_DNA"/>
</dbReference>
<dbReference type="RefSeq" id="WP_006074155.1">
    <property type="nucleotide sequence ID" value="NC_010167.1"/>
</dbReference>
<dbReference type="SMR" id="A9WW44"/>
<dbReference type="KEGG" id="bmt:BSUIS_B1029"/>
<dbReference type="HOGENOM" id="CLU_033347_1_2_5"/>
<dbReference type="Proteomes" id="UP000008545">
    <property type="component" value="Chromosome II"/>
</dbReference>
<dbReference type="GO" id="GO:0005829">
    <property type="term" value="C:cytosol"/>
    <property type="evidence" value="ECO:0007669"/>
    <property type="project" value="TreeGrafter"/>
</dbReference>
<dbReference type="GO" id="GO:0004479">
    <property type="term" value="F:methionyl-tRNA formyltransferase activity"/>
    <property type="evidence" value="ECO:0007669"/>
    <property type="project" value="UniProtKB-UniRule"/>
</dbReference>
<dbReference type="CDD" id="cd08646">
    <property type="entry name" value="FMT_core_Met-tRNA-FMT_N"/>
    <property type="match status" value="1"/>
</dbReference>
<dbReference type="CDD" id="cd08704">
    <property type="entry name" value="Met_tRNA_FMT_C"/>
    <property type="match status" value="1"/>
</dbReference>
<dbReference type="Gene3D" id="3.10.25.10">
    <property type="entry name" value="Formyl transferase, C-terminal domain"/>
    <property type="match status" value="1"/>
</dbReference>
<dbReference type="Gene3D" id="3.40.50.170">
    <property type="entry name" value="Formyl transferase, N-terminal domain"/>
    <property type="match status" value="1"/>
</dbReference>
<dbReference type="HAMAP" id="MF_00182">
    <property type="entry name" value="Formyl_trans"/>
    <property type="match status" value="1"/>
</dbReference>
<dbReference type="InterPro" id="IPR005794">
    <property type="entry name" value="Fmt"/>
</dbReference>
<dbReference type="InterPro" id="IPR005793">
    <property type="entry name" value="Formyl_trans_C"/>
</dbReference>
<dbReference type="InterPro" id="IPR037022">
    <property type="entry name" value="Formyl_trans_C_sf"/>
</dbReference>
<dbReference type="InterPro" id="IPR002376">
    <property type="entry name" value="Formyl_transf_N"/>
</dbReference>
<dbReference type="InterPro" id="IPR036477">
    <property type="entry name" value="Formyl_transf_N_sf"/>
</dbReference>
<dbReference type="InterPro" id="IPR011034">
    <property type="entry name" value="Formyl_transferase-like_C_sf"/>
</dbReference>
<dbReference type="InterPro" id="IPR001555">
    <property type="entry name" value="GART_AS"/>
</dbReference>
<dbReference type="InterPro" id="IPR044135">
    <property type="entry name" value="Met-tRNA-FMT_C"/>
</dbReference>
<dbReference type="InterPro" id="IPR041711">
    <property type="entry name" value="Met-tRNA-FMT_N"/>
</dbReference>
<dbReference type="NCBIfam" id="TIGR00460">
    <property type="entry name" value="fmt"/>
    <property type="match status" value="1"/>
</dbReference>
<dbReference type="PANTHER" id="PTHR11138">
    <property type="entry name" value="METHIONYL-TRNA FORMYLTRANSFERASE"/>
    <property type="match status" value="1"/>
</dbReference>
<dbReference type="PANTHER" id="PTHR11138:SF5">
    <property type="entry name" value="METHIONYL-TRNA FORMYLTRANSFERASE, MITOCHONDRIAL"/>
    <property type="match status" value="1"/>
</dbReference>
<dbReference type="Pfam" id="PF02911">
    <property type="entry name" value="Formyl_trans_C"/>
    <property type="match status" value="1"/>
</dbReference>
<dbReference type="Pfam" id="PF00551">
    <property type="entry name" value="Formyl_trans_N"/>
    <property type="match status" value="1"/>
</dbReference>
<dbReference type="SUPFAM" id="SSF50486">
    <property type="entry name" value="FMT C-terminal domain-like"/>
    <property type="match status" value="1"/>
</dbReference>
<dbReference type="SUPFAM" id="SSF53328">
    <property type="entry name" value="Formyltransferase"/>
    <property type="match status" value="1"/>
</dbReference>
<dbReference type="PROSITE" id="PS00373">
    <property type="entry name" value="GART"/>
    <property type="match status" value="1"/>
</dbReference>
<evidence type="ECO:0000255" key="1">
    <source>
        <dbReference type="HAMAP-Rule" id="MF_00182"/>
    </source>
</evidence>
<organism>
    <name type="scientific">Brucella suis (strain ATCC 23445 / NCTC 10510)</name>
    <dbReference type="NCBI Taxonomy" id="470137"/>
    <lineage>
        <taxon>Bacteria</taxon>
        <taxon>Pseudomonadati</taxon>
        <taxon>Pseudomonadota</taxon>
        <taxon>Alphaproteobacteria</taxon>
        <taxon>Hyphomicrobiales</taxon>
        <taxon>Brucellaceae</taxon>
        <taxon>Brucella/Ochrobactrum group</taxon>
        <taxon>Brucella</taxon>
    </lineage>
</organism>
<accession>A9WW44</accession>
<reference key="1">
    <citation type="submission" date="2007-12" db="EMBL/GenBank/DDBJ databases">
        <title>Brucella suis ATCC 23445 whole genome shotgun sequencing project.</title>
        <authorList>
            <person name="Setubal J.C."/>
            <person name="Bowns C."/>
            <person name="Boyle S."/>
            <person name="Crasta O.R."/>
            <person name="Czar M.J."/>
            <person name="Dharmanolla C."/>
            <person name="Gillespie J.J."/>
            <person name="Kenyon R.W."/>
            <person name="Lu J."/>
            <person name="Mane S."/>
            <person name="Mohapatra S."/>
            <person name="Nagrani S."/>
            <person name="Purkayastha A."/>
            <person name="Rajasimha H.K."/>
            <person name="Shallom J.M."/>
            <person name="Shallom S."/>
            <person name="Shukla M."/>
            <person name="Snyder E.E."/>
            <person name="Sobral B.W."/>
            <person name="Wattam A.R."/>
            <person name="Will R."/>
            <person name="Williams K."/>
            <person name="Yoo H."/>
            <person name="Bruce D."/>
            <person name="Detter C."/>
            <person name="Munk C."/>
            <person name="Brettin T.S."/>
        </authorList>
    </citation>
    <scope>NUCLEOTIDE SEQUENCE [LARGE SCALE GENOMIC DNA]</scope>
    <source>
        <strain>ATCC 23445 / NCTC 10510</strain>
    </source>
</reference>
<keyword id="KW-0648">Protein biosynthesis</keyword>
<keyword id="KW-0808">Transferase</keyword>
<feature type="chain" id="PRO_1000077290" description="Methionyl-tRNA formyltransferase">
    <location>
        <begin position="1"/>
        <end position="306"/>
    </location>
</feature>
<feature type="binding site" evidence="1">
    <location>
        <begin position="110"/>
        <end position="113"/>
    </location>
    <ligand>
        <name>(6S)-5,6,7,8-tetrahydrofolate</name>
        <dbReference type="ChEBI" id="CHEBI:57453"/>
    </ligand>
</feature>
<gene>
    <name evidence="1" type="primary">fmt</name>
    <name type="ordered locus">BSUIS_B1029</name>
</gene>
<comment type="function">
    <text evidence="1">Attaches a formyl group to the free amino group of methionyl-tRNA(fMet). The formyl group appears to play a dual role in the initiator identity of N-formylmethionyl-tRNA by promoting its recognition by IF2 and preventing the misappropriation of this tRNA by the elongation apparatus.</text>
</comment>
<comment type="catalytic activity">
    <reaction evidence="1">
        <text>L-methionyl-tRNA(fMet) + (6R)-10-formyltetrahydrofolate = N-formyl-L-methionyl-tRNA(fMet) + (6S)-5,6,7,8-tetrahydrofolate + H(+)</text>
        <dbReference type="Rhea" id="RHEA:24380"/>
        <dbReference type="Rhea" id="RHEA-COMP:9952"/>
        <dbReference type="Rhea" id="RHEA-COMP:9953"/>
        <dbReference type="ChEBI" id="CHEBI:15378"/>
        <dbReference type="ChEBI" id="CHEBI:57453"/>
        <dbReference type="ChEBI" id="CHEBI:78530"/>
        <dbReference type="ChEBI" id="CHEBI:78844"/>
        <dbReference type="ChEBI" id="CHEBI:195366"/>
        <dbReference type="EC" id="2.1.2.9"/>
    </reaction>
</comment>
<comment type="similarity">
    <text evidence="1">Belongs to the Fmt family.</text>
</comment>